<organism>
    <name type="scientific">Shewanella baltica (strain OS195)</name>
    <dbReference type="NCBI Taxonomy" id="399599"/>
    <lineage>
        <taxon>Bacteria</taxon>
        <taxon>Pseudomonadati</taxon>
        <taxon>Pseudomonadota</taxon>
        <taxon>Gammaproteobacteria</taxon>
        <taxon>Alteromonadales</taxon>
        <taxon>Shewanellaceae</taxon>
        <taxon>Shewanella</taxon>
    </lineage>
</organism>
<sequence length="313" mass="36657">MPVRIPDHLPAAEVLESENIFVMSETRAANQDIRPMKVLILNLMPNKIETETQLLRLLGNTPLQVDVDLLRIHDKESKHTSIDHMNTFYRDFEAVRHKNYDGLIITGAPLGQIDFEDVVYWDHIREIIDWSQEHVTSVLFLCWAAHAGLYHLYGLNRKILQQKRSGVFVHRRTSQHFPLLRGFDDEFFAPHSRFAEMDVEEIRQHPQLQLLAESDEAGAYLVLSRNNRNLFVMGHPEYQKSTLNEEYQRDLSQGLDPNVPQNYYRNDDPKDDAIARWHSHGSLLVSNWLNYYVYQLTPYDLSDMTAMTPWESR</sequence>
<name>METAS_SHEB9</name>
<evidence type="ECO:0000255" key="1">
    <source>
        <dbReference type="HAMAP-Rule" id="MF_00295"/>
    </source>
</evidence>
<gene>
    <name evidence="1" type="primary">metAS</name>
    <name type="ordered locus">Sbal195_1524</name>
</gene>
<protein>
    <recommendedName>
        <fullName evidence="1">Homoserine O-succinyltransferase</fullName>
        <shortName evidence="1">HST</shortName>
        <ecNumber evidence="1">2.3.1.46</ecNumber>
    </recommendedName>
    <alternativeName>
        <fullName evidence="1">Homoserine transsuccinylase</fullName>
        <shortName evidence="1">HTS</shortName>
    </alternativeName>
</protein>
<feature type="chain" id="PRO_1000078936" description="Homoserine O-succinyltransferase">
    <location>
        <begin position="1"/>
        <end position="313"/>
    </location>
</feature>
<feature type="active site" description="Acyl-thioester intermediate" evidence="1">
    <location>
        <position position="142"/>
    </location>
</feature>
<feature type="active site" description="Proton acceptor" evidence="1">
    <location>
        <position position="235"/>
    </location>
</feature>
<feature type="active site" evidence="1">
    <location>
        <position position="237"/>
    </location>
</feature>
<feature type="binding site" evidence="1">
    <location>
        <position position="163"/>
    </location>
    <ligand>
        <name>substrate</name>
    </ligand>
</feature>
<feature type="binding site" evidence="1">
    <location>
        <position position="192"/>
    </location>
    <ligand>
        <name>substrate</name>
    </ligand>
</feature>
<feature type="binding site" evidence="1">
    <location>
        <position position="249"/>
    </location>
    <ligand>
        <name>substrate</name>
    </ligand>
</feature>
<feature type="site" description="Important for acyl-CoA specificity" evidence="1">
    <location>
        <position position="111"/>
    </location>
</feature>
<feature type="site" description="Important for substrate specificity" evidence="1">
    <location>
        <position position="192"/>
    </location>
</feature>
<reference key="1">
    <citation type="submission" date="2007-11" db="EMBL/GenBank/DDBJ databases">
        <title>Complete sequence of chromosome of Shewanella baltica OS195.</title>
        <authorList>
            <consortium name="US DOE Joint Genome Institute"/>
            <person name="Copeland A."/>
            <person name="Lucas S."/>
            <person name="Lapidus A."/>
            <person name="Barry K."/>
            <person name="Glavina del Rio T."/>
            <person name="Dalin E."/>
            <person name="Tice H."/>
            <person name="Pitluck S."/>
            <person name="Chain P."/>
            <person name="Malfatti S."/>
            <person name="Shin M."/>
            <person name="Vergez L."/>
            <person name="Schmutz J."/>
            <person name="Larimer F."/>
            <person name="Land M."/>
            <person name="Hauser L."/>
            <person name="Kyrpides N."/>
            <person name="Kim E."/>
            <person name="Brettar I."/>
            <person name="Rodrigues J."/>
            <person name="Konstantinidis K."/>
            <person name="Klappenbach J."/>
            <person name="Hofle M."/>
            <person name="Tiedje J."/>
            <person name="Richardson P."/>
        </authorList>
    </citation>
    <scope>NUCLEOTIDE SEQUENCE [LARGE SCALE GENOMIC DNA]</scope>
    <source>
        <strain>OS195</strain>
    </source>
</reference>
<proteinExistence type="inferred from homology"/>
<comment type="function">
    <text evidence="1">Transfers a succinyl group from succinyl-CoA to L-homoserine, forming succinyl-L-homoserine.</text>
</comment>
<comment type="catalytic activity">
    <reaction evidence="1">
        <text>L-homoserine + succinyl-CoA = O-succinyl-L-homoserine + CoA</text>
        <dbReference type="Rhea" id="RHEA:22008"/>
        <dbReference type="ChEBI" id="CHEBI:57287"/>
        <dbReference type="ChEBI" id="CHEBI:57292"/>
        <dbReference type="ChEBI" id="CHEBI:57476"/>
        <dbReference type="ChEBI" id="CHEBI:57661"/>
        <dbReference type="EC" id="2.3.1.46"/>
    </reaction>
</comment>
<comment type="pathway">
    <text evidence="1">Amino-acid biosynthesis; L-methionine biosynthesis via de novo pathway; O-succinyl-L-homoserine from L-homoserine: step 1/1.</text>
</comment>
<comment type="subcellular location">
    <subcellularLocation>
        <location evidence="1">Cytoplasm</location>
    </subcellularLocation>
</comment>
<comment type="similarity">
    <text evidence="1">Belongs to the MetA family.</text>
</comment>
<dbReference type="EC" id="2.3.1.46" evidence="1"/>
<dbReference type="EMBL" id="CP000891">
    <property type="protein sequence ID" value="ABX48697.1"/>
    <property type="molecule type" value="Genomic_DNA"/>
</dbReference>
<dbReference type="SMR" id="A9KVF7"/>
<dbReference type="KEGG" id="sbn:Sbal195_1524"/>
<dbReference type="HOGENOM" id="CLU_057851_0_1_6"/>
<dbReference type="UniPathway" id="UPA00051">
    <property type="reaction ID" value="UER00075"/>
</dbReference>
<dbReference type="Proteomes" id="UP000000770">
    <property type="component" value="Chromosome"/>
</dbReference>
<dbReference type="GO" id="GO:0005737">
    <property type="term" value="C:cytoplasm"/>
    <property type="evidence" value="ECO:0007669"/>
    <property type="project" value="UniProtKB-SubCell"/>
</dbReference>
<dbReference type="GO" id="GO:0004414">
    <property type="term" value="F:homoserine O-acetyltransferase activity"/>
    <property type="evidence" value="ECO:0007669"/>
    <property type="project" value="UniProtKB-UniRule"/>
</dbReference>
<dbReference type="GO" id="GO:0008899">
    <property type="term" value="F:homoserine O-succinyltransferase activity"/>
    <property type="evidence" value="ECO:0007669"/>
    <property type="project" value="UniProtKB-EC"/>
</dbReference>
<dbReference type="GO" id="GO:0019281">
    <property type="term" value="P:L-methionine biosynthetic process from homoserine via O-succinyl-L-homoserine and cystathionine"/>
    <property type="evidence" value="ECO:0007669"/>
    <property type="project" value="InterPro"/>
</dbReference>
<dbReference type="CDD" id="cd03131">
    <property type="entry name" value="GATase1_HTS"/>
    <property type="match status" value="1"/>
</dbReference>
<dbReference type="FunFam" id="3.40.50.880:FF:000004">
    <property type="entry name" value="Homoserine O-succinyltransferase"/>
    <property type="match status" value="1"/>
</dbReference>
<dbReference type="Gene3D" id="3.40.50.880">
    <property type="match status" value="1"/>
</dbReference>
<dbReference type="HAMAP" id="MF_00295">
    <property type="entry name" value="MetA_acyltransf"/>
    <property type="match status" value="1"/>
</dbReference>
<dbReference type="InterPro" id="IPR029062">
    <property type="entry name" value="Class_I_gatase-like"/>
</dbReference>
<dbReference type="InterPro" id="IPR005697">
    <property type="entry name" value="HST_MetA"/>
</dbReference>
<dbReference type="InterPro" id="IPR033752">
    <property type="entry name" value="MetA_family"/>
</dbReference>
<dbReference type="NCBIfam" id="TIGR01001">
    <property type="entry name" value="metA"/>
    <property type="match status" value="1"/>
</dbReference>
<dbReference type="PANTHER" id="PTHR20919">
    <property type="entry name" value="HOMOSERINE O-SUCCINYLTRANSFERASE"/>
    <property type="match status" value="1"/>
</dbReference>
<dbReference type="PANTHER" id="PTHR20919:SF0">
    <property type="entry name" value="HOMOSERINE O-SUCCINYLTRANSFERASE"/>
    <property type="match status" value="1"/>
</dbReference>
<dbReference type="Pfam" id="PF04204">
    <property type="entry name" value="HTS"/>
    <property type="match status" value="1"/>
</dbReference>
<dbReference type="PIRSF" id="PIRSF000450">
    <property type="entry name" value="H_ser_succinyltr"/>
    <property type="match status" value="1"/>
</dbReference>
<dbReference type="SUPFAM" id="SSF52317">
    <property type="entry name" value="Class I glutamine amidotransferase-like"/>
    <property type="match status" value="1"/>
</dbReference>
<accession>A9KVF7</accession>
<keyword id="KW-0012">Acyltransferase</keyword>
<keyword id="KW-0028">Amino-acid biosynthesis</keyword>
<keyword id="KW-0963">Cytoplasm</keyword>
<keyword id="KW-0486">Methionine biosynthesis</keyword>
<keyword id="KW-0808">Transferase</keyword>